<dbReference type="EC" id="4.1.1.23" evidence="1"/>
<dbReference type="EMBL" id="CP000970">
    <property type="protein sequence ID" value="ACB16058.1"/>
    <property type="molecule type" value="Genomic_DNA"/>
</dbReference>
<dbReference type="RefSeq" id="WP_000176265.1">
    <property type="nucleotide sequence ID" value="NC_010498.1"/>
</dbReference>
<dbReference type="SMR" id="B1LH07"/>
<dbReference type="KEGG" id="ecm:EcSMS35_1847"/>
<dbReference type="HOGENOM" id="CLU_067069_0_0_6"/>
<dbReference type="UniPathway" id="UPA00070">
    <property type="reaction ID" value="UER00120"/>
</dbReference>
<dbReference type="Proteomes" id="UP000007011">
    <property type="component" value="Chromosome"/>
</dbReference>
<dbReference type="GO" id="GO:0005829">
    <property type="term" value="C:cytosol"/>
    <property type="evidence" value="ECO:0007669"/>
    <property type="project" value="TreeGrafter"/>
</dbReference>
<dbReference type="GO" id="GO:0004590">
    <property type="term" value="F:orotidine-5'-phosphate decarboxylase activity"/>
    <property type="evidence" value="ECO:0007669"/>
    <property type="project" value="UniProtKB-UniRule"/>
</dbReference>
<dbReference type="GO" id="GO:0006207">
    <property type="term" value="P:'de novo' pyrimidine nucleobase biosynthetic process"/>
    <property type="evidence" value="ECO:0007669"/>
    <property type="project" value="InterPro"/>
</dbReference>
<dbReference type="GO" id="GO:0044205">
    <property type="term" value="P:'de novo' UMP biosynthetic process"/>
    <property type="evidence" value="ECO:0007669"/>
    <property type="project" value="UniProtKB-UniRule"/>
</dbReference>
<dbReference type="CDD" id="cd04725">
    <property type="entry name" value="OMP_decarboxylase_like"/>
    <property type="match status" value="1"/>
</dbReference>
<dbReference type="FunFam" id="3.20.20.70:FF:000015">
    <property type="entry name" value="Orotidine 5'-phosphate decarboxylase"/>
    <property type="match status" value="1"/>
</dbReference>
<dbReference type="Gene3D" id="3.20.20.70">
    <property type="entry name" value="Aldolase class I"/>
    <property type="match status" value="1"/>
</dbReference>
<dbReference type="HAMAP" id="MF_01200_B">
    <property type="entry name" value="OMPdecase_type1_B"/>
    <property type="match status" value="1"/>
</dbReference>
<dbReference type="InterPro" id="IPR013785">
    <property type="entry name" value="Aldolase_TIM"/>
</dbReference>
<dbReference type="InterPro" id="IPR014732">
    <property type="entry name" value="OMPdecase"/>
</dbReference>
<dbReference type="InterPro" id="IPR018089">
    <property type="entry name" value="OMPdecase_AS"/>
</dbReference>
<dbReference type="InterPro" id="IPR047596">
    <property type="entry name" value="OMPdecase_bac"/>
</dbReference>
<dbReference type="InterPro" id="IPR001754">
    <property type="entry name" value="OMPdeCOase_dom"/>
</dbReference>
<dbReference type="InterPro" id="IPR011060">
    <property type="entry name" value="RibuloseP-bd_barrel"/>
</dbReference>
<dbReference type="NCBIfam" id="NF001273">
    <property type="entry name" value="PRK00230.1"/>
    <property type="match status" value="1"/>
</dbReference>
<dbReference type="NCBIfam" id="TIGR01740">
    <property type="entry name" value="pyrF"/>
    <property type="match status" value="1"/>
</dbReference>
<dbReference type="PANTHER" id="PTHR32119">
    <property type="entry name" value="OROTIDINE 5'-PHOSPHATE DECARBOXYLASE"/>
    <property type="match status" value="1"/>
</dbReference>
<dbReference type="PANTHER" id="PTHR32119:SF2">
    <property type="entry name" value="OROTIDINE 5'-PHOSPHATE DECARBOXYLASE"/>
    <property type="match status" value="1"/>
</dbReference>
<dbReference type="Pfam" id="PF00215">
    <property type="entry name" value="OMPdecase"/>
    <property type="match status" value="1"/>
</dbReference>
<dbReference type="SMART" id="SM00934">
    <property type="entry name" value="OMPdecase"/>
    <property type="match status" value="1"/>
</dbReference>
<dbReference type="SUPFAM" id="SSF51366">
    <property type="entry name" value="Ribulose-phoshate binding barrel"/>
    <property type="match status" value="1"/>
</dbReference>
<dbReference type="PROSITE" id="PS00156">
    <property type="entry name" value="OMPDECASE"/>
    <property type="match status" value="1"/>
</dbReference>
<name>PYRF_ECOSM</name>
<gene>
    <name evidence="1" type="primary">pyrF</name>
    <name type="ordered locus">EcSMS35_1847</name>
</gene>
<protein>
    <recommendedName>
        <fullName evidence="1">Orotidine 5'-phosphate decarboxylase</fullName>
        <ecNumber evidence="1">4.1.1.23</ecNumber>
    </recommendedName>
    <alternativeName>
        <fullName evidence="1">OMP decarboxylase</fullName>
        <shortName evidence="1">OMPDCase</shortName>
        <shortName evidence="1">OMPdecase</shortName>
    </alternativeName>
</protein>
<comment type="function">
    <text evidence="1">Catalyzes the decarboxylation of orotidine 5'-monophosphate (OMP) to uridine 5'-monophosphate (UMP).</text>
</comment>
<comment type="catalytic activity">
    <reaction evidence="1">
        <text>orotidine 5'-phosphate + H(+) = UMP + CO2</text>
        <dbReference type="Rhea" id="RHEA:11596"/>
        <dbReference type="ChEBI" id="CHEBI:15378"/>
        <dbReference type="ChEBI" id="CHEBI:16526"/>
        <dbReference type="ChEBI" id="CHEBI:57538"/>
        <dbReference type="ChEBI" id="CHEBI:57865"/>
        <dbReference type="EC" id="4.1.1.23"/>
    </reaction>
</comment>
<comment type="pathway">
    <text evidence="1">Pyrimidine metabolism; UMP biosynthesis via de novo pathway; UMP from orotate: step 2/2.</text>
</comment>
<comment type="subunit">
    <text evidence="1">Homodimer.</text>
</comment>
<comment type="similarity">
    <text evidence="1">Belongs to the OMP decarboxylase family. Type 1 subfamily.</text>
</comment>
<reference key="1">
    <citation type="journal article" date="2008" name="J. Bacteriol.">
        <title>Insights into the environmental resistance gene pool from the genome sequence of the multidrug-resistant environmental isolate Escherichia coli SMS-3-5.</title>
        <authorList>
            <person name="Fricke W.F."/>
            <person name="Wright M.S."/>
            <person name="Lindell A.H."/>
            <person name="Harkins D.M."/>
            <person name="Baker-Austin C."/>
            <person name="Ravel J."/>
            <person name="Stepanauskas R."/>
        </authorList>
    </citation>
    <scope>NUCLEOTIDE SEQUENCE [LARGE SCALE GENOMIC DNA]</scope>
    <source>
        <strain>SMS-3-5 / SECEC</strain>
    </source>
</reference>
<organism>
    <name type="scientific">Escherichia coli (strain SMS-3-5 / SECEC)</name>
    <dbReference type="NCBI Taxonomy" id="439855"/>
    <lineage>
        <taxon>Bacteria</taxon>
        <taxon>Pseudomonadati</taxon>
        <taxon>Pseudomonadota</taxon>
        <taxon>Gammaproteobacteria</taxon>
        <taxon>Enterobacterales</taxon>
        <taxon>Enterobacteriaceae</taxon>
        <taxon>Escherichia</taxon>
    </lineage>
</organism>
<proteinExistence type="inferred from homology"/>
<evidence type="ECO:0000255" key="1">
    <source>
        <dbReference type="HAMAP-Rule" id="MF_01200"/>
    </source>
</evidence>
<keyword id="KW-0210">Decarboxylase</keyword>
<keyword id="KW-0456">Lyase</keyword>
<keyword id="KW-0665">Pyrimidine biosynthesis</keyword>
<accession>B1LH07</accession>
<feature type="chain" id="PRO_1000138528" description="Orotidine 5'-phosphate decarboxylase">
    <location>
        <begin position="1"/>
        <end position="245"/>
    </location>
</feature>
<feature type="active site" description="Proton donor" evidence="1">
    <location>
        <position position="73"/>
    </location>
</feature>
<feature type="binding site" evidence="1">
    <location>
        <position position="22"/>
    </location>
    <ligand>
        <name>substrate</name>
    </ligand>
</feature>
<feature type="binding site" evidence="1">
    <location>
        <position position="44"/>
    </location>
    <ligand>
        <name>substrate</name>
    </ligand>
</feature>
<feature type="binding site" evidence="1">
    <location>
        <begin position="71"/>
        <end position="80"/>
    </location>
    <ligand>
        <name>substrate</name>
    </ligand>
</feature>
<feature type="binding site" evidence="1">
    <location>
        <position position="131"/>
    </location>
    <ligand>
        <name>substrate</name>
    </ligand>
</feature>
<feature type="binding site" evidence="1">
    <location>
        <position position="192"/>
    </location>
    <ligand>
        <name>substrate</name>
    </ligand>
</feature>
<feature type="binding site" evidence="1">
    <location>
        <position position="201"/>
    </location>
    <ligand>
        <name>substrate</name>
    </ligand>
</feature>
<feature type="binding site" evidence="1">
    <location>
        <position position="221"/>
    </location>
    <ligand>
        <name>substrate</name>
    </ligand>
</feature>
<feature type="binding site" evidence="1">
    <location>
        <position position="222"/>
    </location>
    <ligand>
        <name>substrate</name>
    </ligand>
</feature>
<sequence length="245" mass="26230">MTLTASSSSRAVTNSPVVVALDYHNRDAALAFVDKIDPRDCRLKVGKEMFTLFGPQFVRELQQRGFDIFLDLKFHDIPNTAAHAVAAAADLGVWMVNVHASGGARMMTAAREALVPFGKDAPLLIAVTVLTSMEASDLADLGVTLSPADYAERLAALTQKCGLDGVVCSAQEAVRFKQVFGQEFKLVTPGIRPQGSEAGDQRRIMTPEQALAAGVDYMVIGRPVTQSVDPAQTLKAINASLQRSA</sequence>